<organism>
    <name type="scientific">Lactococcus lactis subsp. cremoris</name>
    <name type="common">Streptococcus cremoris</name>
    <dbReference type="NCBI Taxonomy" id="1359"/>
    <lineage>
        <taxon>Bacteria</taxon>
        <taxon>Bacillati</taxon>
        <taxon>Bacillota</taxon>
        <taxon>Bacilli</taxon>
        <taxon>Lactobacillales</taxon>
        <taxon>Streptococcaceae</taxon>
        <taxon>Lactococcus</taxon>
    </lineage>
</organism>
<protein>
    <recommendedName>
        <fullName evidence="1">Protein translocase subunit SecY</fullName>
    </recommendedName>
</protein>
<accession>P27148</accession>
<reference key="1">
    <citation type="journal article" date="1991" name="FEBS Lett.">
        <title>Nucleotide sequence of the secY gene from Lactococcus lactis and identification of conserved regions by comparison of four SecY proteins.</title>
        <authorList>
            <person name="Koivula T."/>
            <person name="Palva I."/>
            <person name="Hemilae H."/>
        </authorList>
    </citation>
    <scope>NUCLEOTIDE SEQUENCE [GENOMIC DNA]</scope>
    <source>
        <strain>MG1614</strain>
    </source>
</reference>
<reference key="2">
    <citation type="journal article" date="1991" name="J. Gen. Microbiol.">
        <title>Nucleotide sequence of a Lactococcus lactis gene cluster encoding adenylate kinase, initiation factor 1 and ribosomal proteins.</title>
        <authorList>
            <person name="Koivula T."/>
            <person name="Hemilae H."/>
        </authorList>
    </citation>
    <scope>NUCLEOTIDE SEQUENCE [GENOMIC DNA] OF 422-439</scope>
    <source>
        <strain>MG1614</strain>
    </source>
</reference>
<gene>
    <name evidence="1" type="primary">secY</name>
</gene>
<comment type="function">
    <text evidence="1">The central subunit of the protein translocation channel SecYEG. Consists of two halves formed by TMs 1-5 and 6-10. These two domains form a lateral gate at the front which open onto the bilayer between TMs 2 and 7, and are clamped together by SecE at the back. The channel is closed by both a pore ring composed of hydrophobic SecY resides and a short helix (helix 2A) on the extracellular side of the membrane which forms a plug. The plug probably moves laterally to allow the channel to open. The ring and the pore may move independently.</text>
</comment>
<comment type="subunit">
    <text evidence="1">Component of the Sec protein translocase complex. Heterotrimer consisting of SecY, SecE and SecG subunits. The heterotrimers can form oligomers, although 1 heterotrimer is thought to be able to translocate proteins. Interacts with the ribosome. Interacts with SecDF, and other proteins may be involved. Interacts with SecA.</text>
</comment>
<comment type="subcellular location">
    <subcellularLocation>
        <location evidence="1">Cell membrane</location>
        <topology evidence="1">Multi-pass membrane protein</topology>
    </subcellularLocation>
</comment>
<comment type="similarity">
    <text evidence="1">Belongs to the SecY/SEC61-alpha family.</text>
</comment>
<keyword id="KW-1003">Cell membrane</keyword>
<keyword id="KW-0472">Membrane</keyword>
<keyword id="KW-0653">Protein transport</keyword>
<keyword id="KW-0811">Translocation</keyword>
<keyword id="KW-0812">Transmembrane</keyword>
<keyword id="KW-1133">Transmembrane helix</keyword>
<keyword id="KW-0813">Transport</keyword>
<name>SECY_LACLC</name>
<sequence>MFFKTLKEAFKVKDVRARILFTIFILFVFRLGAHITAPGVNVQNLQQVADLPFLSMMNLVSGNAMQNYSLFAMGVSPYITASIIVQLLQMDILPKFVEWSKQGEIGRRKLNQATRYITLVLAMAQSIGITAGFQAMSSLNIVQNPNWQSYLMIGVLLTTGSMVVTWMGEQINEKGFGSGVSVIIFAGIVSGIPSAIKSVYDEKFLNVRPSEIPMSWIFVIGLILSAIVIIYVTTFVQQAERKVPIQYTKLTQGAPTSSYLPLRVNPAGVIPVIFAGSITTAPATILQFLQRSQGSNVGWLSTLQNALSYTTWTGMLFYALLIVLFTFFYSFVQVNPEKMAENLQKQGSYIPSVRPGKGTEKYVSRLLMRLATVGSLFLGLISIIPIAAQNVWGLPKIVALGGTSLLILIQVAIQAVKQLEGYLLKRKYAGFMDNPLETK</sequence>
<evidence type="ECO:0000255" key="1">
    <source>
        <dbReference type="HAMAP-Rule" id="MF_01465"/>
    </source>
</evidence>
<feature type="chain" id="PRO_0000131728" description="Protein translocase subunit SecY">
    <location>
        <begin position="1"/>
        <end position="439"/>
    </location>
</feature>
<feature type="transmembrane region" description="Helical" evidence="1">
    <location>
        <begin position="19"/>
        <end position="39"/>
    </location>
</feature>
<feature type="transmembrane region" description="Helical" evidence="1">
    <location>
        <begin position="68"/>
        <end position="88"/>
    </location>
</feature>
<feature type="transmembrane region" description="Helical" evidence="1">
    <location>
        <begin position="116"/>
        <end position="136"/>
    </location>
</feature>
<feature type="transmembrane region" description="Helical" evidence="1">
    <location>
        <begin position="151"/>
        <end position="171"/>
    </location>
</feature>
<feature type="transmembrane region" description="Helical" evidence="1">
    <location>
        <begin position="176"/>
        <end position="196"/>
    </location>
</feature>
<feature type="transmembrane region" description="Helical" evidence="1">
    <location>
        <begin position="216"/>
        <end position="236"/>
    </location>
</feature>
<feature type="transmembrane region" description="Helical" evidence="1">
    <location>
        <begin position="269"/>
        <end position="289"/>
    </location>
</feature>
<feature type="transmembrane region" description="Helical" evidence="1">
    <location>
        <begin position="312"/>
        <end position="332"/>
    </location>
</feature>
<feature type="transmembrane region" description="Helical" evidence="1">
    <location>
        <begin position="373"/>
        <end position="393"/>
    </location>
</feature>
<feature type="transmembrane region" description="Helical" evidence="1">
    <location>
        <begin position="396"/>
        <end position="416"/>
    </location>
</feature>
<proteinExistence type="inferred from homology"/>
<dbReference type="EMBL" id="X59250">
    <property type="protein sequence ID" value="CAA41939.1"/>
    <property type="molecule type" value="Genomic_DNA"/>
</dbReference>
<dbReference type="PIR" id="S17985">
    <property type="entry name" value="S17985"/>
</dbReference>
<dbReference type="RefSeq" id="WP_011836021.1">
    <property type="nucleotide sequence ID" value="NZ_RIMN01000019.1"/>
</dbReference>
<dbReference type="SMR" id="P27148"/>
<dbReference type="OMA" id="FAMWLGE"/>
<dbReference type="GO" id="GO:0005886">
    <property type="term" value="C:plasma membrane"/>
    <property type="evidence" value="ECO:0007669"/>
    <property type="project" value="UniProtKB-SubCell"/>
</dbReference>
<dbReference type="GO" id="GO:0065002">
    <property type="term" value="P:intracellular protein transmembrane transport"/>
    <property type="evidence" value="ECO:0007669"/>
    <property type="project" value="UniProtKB-UniRule"/>
</dbReference>
<dbReference type="GO" id="GO:0006605">
    <property type="term" value="P:protein targeting"/>
    <property type="evidence" value="ECO:0007669"/>
    <property type="project" value="UniProtKB-UniRule"/>
</dbReference>
<dbReference type="GO" id="GO:0043952">
    <property type="term" value="P:protein transport by the Sec complex"/>
    <property type="evidence" value="ECO:0007669"/>
    <property type="project" value="UniProtKB-UniRule"/>
</dbReference>
<dbReference type="FunFam" id="1.10.3370.10:FF:000001">
    <property type="entry name" value="Preprotein translocase subunit SecY"/>
    <property type="match status" value="1"/>
</dbReference>
<dbReference type="Gene3D" id="1.10.3370.10">
    <property type="entry name" value="SecY subunit domain"/>
    <property type="match status" value="1"/>
</dbReference>
<dbReference type="HAMAP" id="MF_01465">
    <property type="entry name" value="SecY"/>
    <property type="match status" value="1"/>
</dbReference>
<dbReference type="InterPro" id="IPR026593">
    <property type="entry name" value="SecY"/>
</dbReference>
<dbReference type="InterPro" id="IPR002208">
    <property type="entry name" value="SecY/SEC61-alpha"/>
</dbReference>
<dbReference type="InterPro" id="IPR030659">
    <property type="entry name" value="SecY_CS"/>
</dbReference>
<dbReference type="InterPro" id="IPR023201">
    <property type="entry name" value="SecY_dom_sf"/>
</dbReference>
<dbReference type="NCBIfam" id="TIGR00967">
    <property type="entry name" value="3a0501s007"/>
    <property type="match status" value="1"/>
</dbReference>
<dbReference type="PANTHER" id="PTHR10906">
    <property type="entry name" value="SECY/SEC61-ALPHA FAMILY MEMBER"/>
    <property type="match status" value="1"/>
</dbReference>
<dbReference type="Pfam" id="PF00344">
    <property type="entry name" value="SecY"/>
    <property type="match status" value="1"/>
</dbReference>
<dbReference type="PIRSF" id="PIRSF004557">
    <property type="entry name" value="SecY"/>
    <property type="match status" value="1"/>
</dbReference>
<dbReference type="PRINTS" id="PR00303">
    <property type="entry name" value="SECYTRNLCASE"/>
</dbReference>
<dbReference type="SUPFAM" id="SSF103491">
    <property type="entry name" value="Preprotein translocase SecY subunit"/>
    <property type="match status" value="1"/>
</dbReference>
<dbReference type="PROSITE" id="PS00755">
    <property type="entry name" value="SECY_1"/>
    <property type="match status" value="1"/>
</dbReference>
<dbReference type="PROSITE" id="PS00756">
    <property type="entry name" value="SECY_2"/>
    <property type="match status" value="1"/>
</dbReference>